<name>PGAP2_XENTR</name>
<keyword id="KW-0333">Golgi apparatus</keyword>
<keyword id="KW-0337">GPI-anchor biosynthesis</keyword>
<keyword id="KW-0472">Membrane</keyword>
<keyword id="KW-1185">Reference proteome</keyword>
<keyword id="KW-0808">Transferase</keyword>
<keyword id="KW-0812">Transmembrane</keyword>
<keyword id="KW-1133">Transmembrane helix</keyword>
<protein>
    <recommendedName>
        <fullName evidence="4">Acyltransferase PGAP2</fullName>
        <ecNumber evidence="1">2.3.-.-</ecNumber>
    </recommendedName>
    <alternativeName>
        <fullName>Post-GPI attachment to proteins factor 2</fullName>
    </alternativeName>
</protein>
<reference key="1">
    <citation type="submission" date="2007-10" db="EMBL/GenBank/DDBJ databases">
        <authorList>
            <consortium name="NIH - Xenopus Gene Collection (XGC) project"/>
        </authorList>
    </citation>
    <scope>NUCLEOTIDE SEQUENCE [LARGE SCALE MRNA]</scope>
    <source>
        <tissue>Testis</tissue>
    </source>
</reference>
<evidence type="ECO:0000250" key="1">
    <source>
        <dbReference type="UniProtKB" id="Q2ABP2"/>
    </source>
</evidence>
<evidence type="ECO:0000250" key="2">
    <source>
        <dbReference type="UniProtKB" id="Q9UHJ9"/>
    </source>
</evidence>
<evidence type="ECO:0000255" key="3"/>
<evidence type="ECO:0000305" key="4"/>
<sequence>MVPVGPERGANSLFSLRFTTFAVGTVSLPLFAFLFCIVWSLLFNFSETTATHCHVPNYLPSVSAAIGGETPQRYIWRLCIGLHSAPRFLVGVAYLHYYQGTPCSSPAYPRLCHLNFLLNCCEIFFLILLTYVSSSENYEVHKLGFMAFMLFSVGYMFVTCSLWRVARKGSGSLEERTSYAWKKRLFGFYLLMFLSSILVYIWHNMYCEAGVYTVFALLEYLVVLSNMGFHMTAWWDFGNKELMICSPGDKRI</sequence>
<gene>
    <name evidence="2" type="primary">pgap2</name>
</gene>
<accession>A8KBG2</accession>
<dbReference type="EC" id="2.3.-.-" evidence="1"/>
<dbReference type="EMBL" id="BC154099">
    <property type="protein sequence ID" value="AAI54100.1"/>
    <property type="molecule type" value="mRNA"/>
</dbReference>
<dbReference type="RefSeq" id="NP_001106477.1">
    <property type="nucleotide sequence ID" value="NM_001113006.1"/>
</dbReference>
<dbReference type="FunCoup" id="A8KBG2">
    <property type="interactions" value="790"/>
</dbReference>
<dbReference type="GeneID" id="100127662"/>
<dbReference type="KEGG" id="xtr:100127662"/>
<dbReference type="CTD" id="27315"/>
<dbReference type="Xenbase" id="XB-GENE-6454013">
    <property type="gene designation" value="pgap2"/>
</dbReference>
<dbReference type="InParanoid" id="A8KBG2"/>
<dbReference type="OrthoDB" id="68581at2759"/>
<dbReference type="Proteomes" id="UP000008143">
    <property type="component" value="Chromosome 2"/>
</dbReference>
<dbReference type="GO" id="GO:0005789">
    <property type="term" value="C:endoplasmic reticulum membrane"/>
    <property type="evidence" value="ECO:0000250"/>
    <property type="project" value="UniProtKB"/>
</dbReference>
<dbReference type="GO" id="GO:0000139">
    <property type="term" value="C:Golgi membrane"/>
    <property type="evidence" value="ECO:0000250"/>
    <property type="project" value="UniProtKB"/>
</dbReference>
<dbReference type="GO" id="GO:0006506">
    <property type="term" value="P:GPI anchor biosynthetic process"/>
    <property type="evidence" value="ECO:0000250"/>
    <property type="project" value="UniProtKB"/>
</dbReference>
<dbReference type="InterPro" id="IPR019402">
    <property type="entry name" value="Frag1/DRAM/Sfk1"/>
</dbReference>
<dbReference type="InterPro" id="IPR039545">
    <property type="entry name" value="PGAP2"/>
</dbReference>
<dbReference type="PANTHER" id="PTHR12892">
    <property type="entry name" value="FGF RECEPTOR ACTIVATING PROTEIN 1"/>
    <property type="match status" value="1"/>
</dbReference>
<dbReference type="PANTHER" id="PTHR12892:SF11">
    <property type="entry name" value="POST-GPI ATTACHMENT TO PROTEINS FACTOR 2"/>
    <property type="match status" value="1"/>
</dbReference>
<dbReference type="Pfam" id="PF10277">
    <property type="entry name" value="Frag1"/>
    <property type="match status" value="1"/>
</dbReference>
<organism>
    <name type="scientific">Xenopus tropicalis</name>
    <name type="common">Western clawed frog</name>
    <name type="synonym">Silurana tropicalis</name>
    <dbReference type="NCBI Taxonomy" id="8364"/>
    <lineage>
        <taxon>Eukaryota</taxon>
        <taxon>Metazoa</taxon>
        <taxon>Chordata</taxon>
        <taxon>Craniata</taxon>
        <taxon>Vertebrata</taxon>
        <taxon>Euteleostomi</taxon>
        <taxon>Amphibia</taxon>
        <taxon>Batrachia</taxon>
        <taxon>Anura</taxon>
        <taxon>Pipoidea</taxon>
        <taxon>Pipidae</taxon>
        <taxon>Xenopodinae</taxon>
        <taxon>Xenopus</taxon>
        <taxon>Silurana</taxon>
    </lineage>
</organism>
<comment type="function">
    <text evidence="1">Involved in the fatty acid remodeling steps of GPI-anchor maturation where the unsaturated acyl chain at sn-2 of inositol phosphate is replaced by a saturated stearoyl chain. May catalyze the second step of the fatty acid remodeling, by reacylating a lyso-GPI intermediate at sn-2 of inositol phosphate by a saturated chain. The fatty acid remodeling steps is critical for the integration of GPI-APs into lipid rafts.</text>
</comment>
<comment type="subcellular location">
    <subcellularLocation>
        <location evidence="2">Golgi apparatus membrane</location>
        <topology evidence="3">Multi-pass membrane protein</topology>
    </subcellularLocation>
</comment>
<comment type="similarity">
    <text evidence="4">Belongs to the PGAP2 family.</text>
</comment>
<proteinExistence type="evidence at transcript level"/>
<feature type="chain" id="PRO_0000326099" description="Acyltransferase PGAP2">
    <location>
        <begin position="1"/>
        <end position="252"/>
    </location>
</feature>
<feature type="topological domain" description="Cytoplasmic" evidence="3">
    <location>
        <begin position="1"/>
        <end position="22"/>
    </location>
</feature>
<feature type="transmembrane region" description="Helical" evidence="3">
    <location>
        <begin position="23"/>
        <end position="43"/>
    </location>
</feature>
<feature type="topological domain" description="Lumenal" evidence="3">
    <location>
        <begin position="44"/>
        <end position="77"/>
    </location>
</feature>
<feature type="transmembrane region" description="Helical" evidence="3">
    <location>
        <begin position="78"/>
        <end position="98"/>
    </location>
</feature>
<feature type="topological domain" description="Cytoplasmic" evidence="3">
    <location>
        <begin position="99"/>
        <end position="111"/>
    </location>
</feature>
<feature type="transmembrane region" description="Helical" evidence="3">
    <location>
        <begin position="112"/>
        <end position="132"/>
    </location>
</feature>
<feature type="topological domain" description="Lumenal" evidence="3">
    <location>
        <begin position="133"/>
        <end position="142"/>
    </location>
</feature>
<feature type="transmembrane region" description="Helical" evidence="3">
    <location>
        <begin position="143"/>
        <end position="163"/>
    </location>
</feature>
<feature type="topological domain" description="Cytoplasmic" evidence="3">
    <location>
        <begin position="164"/>
        <end position="184"/>
    </location>
</feature>
<feature type="transmembrane region" description="Helical" evidence="3">
    <location>
        <begin position="185"/>
        <end position="205"/>
    </location>
</feature>
<feature type="topological domain" description="Lumenal" evidence="3">
    <location>
        <begin position="206"/>
        <end position="208"/>
    </location>
</feature>
<feature type="transmembrane region" description="Helical" evidence="3">
    <location>
        <begin position="209"/>
        <end position="229"/>
    </location>
</feature>
<feature type="topological domain" description="Cytoplasmic" evidence="3">
    <location>
        <begin position="230"/>
        <end position="252"/>
    </location>
</feature>